<protein>
    <recommendedName>
        <fullName>Lactosylceramide alpha-2,3-sialyltransferase</fullName>
        <ecNumber evidence="2">2.4.3.9</ecNumber>
    </recommendedName>
    <alternativeName>
        <fullName>CMP-NeuAc:lactosylceramide alpha-2,3-sialyltransferase</fullName>
    </alternativeName>
    <alternativeName>
        <fullName>Ganglioside GM3 synthase</fullName>
    </alternativeName>
    <alternativeName>
        <fullName>ST3Gal V</fullName>
        <shortName>ST3GalV</shortName>
    </alternativeName>
    <alternativeName>
        <fullName>Sialyltransferase 9</fullName>
    </alternativeName>
</protein>
<accession>Q6KB55</accession>
<feature type="chain" id="PRO_0000149304" description="Lactosylceramide alpha-2,3-sialyltransferase">
    <location>
        <begin position="1"/>
        <end position="362"/>
    </location>
</feature>
<feature type="topological domain" description="Cytoplasmic" evidence="3">
    <location>
        <begin position="1"/>
        <end position="5"/>
    </location>
</feature>
<feature type="transmembrane region" description="Helical; Signal-anchor for type II membrane protein" evidence="3">
    <location>
        <begin position="6"/>
        <end position="26"/>
    </location>
</feature>
<feature type="topological domain" description="Lumenal" evidence="3">
    <location>
        <begin position="27"/>
        <end position="362"/>
    </location>
</feature>
<feature type="glycosylation site" description="N-linked (GlcNAc...) asparagine" evidence="3">
    <location>
        <position position="30"/>
    </location>
</feature>
<feature type="glycosylation site" description="N-linked (GlcNAc...) asparagine" evidence="3">
    <location>
        <position position="180"/>
    </location>
</feature>
<feature type="glycosylation site" description="N-linked (GlcNAc...) asparagine" evidence="3">
    <location>
        <position position="224"/>
    </location>
</feature>
<feature type="glycosylation site" description="N-linked (GlcNAc...) asparagine" evidence="3">
    <location>
        <position position="334"/>
    </location>
</feature>
<feature type="disulfide bond" evidence="1">
    <location>
        <begin position="139"/>
        <end position="297"/>
    </location>
</feature>
<organism>
    <name type="scientific">Pan troglodytes</name>
    <name type="common">Chimpanzee</name>
    <dbReference type="NCBI Taxonomy" id="9598"/>
    <lineage>
        <taxon>Eukaryota</taxon>
        <taxon>Metazoa</taxon>
        <taxon>Chordata</taxon>
        <taxon>Craniata</taxon>
        <taxon>Vertebrata</taxon>
        <taxon>Euteleostomi</taxon>
        <taxon>Mammalia</taxon>
        <taxon>Eutheria</taxon>
        <taxon>Euarchontoglires</taxon>
        <taxon>Primates</taxon>
        <taxon>Haplorrhini</taxon>
        <taxon>Catarrhini</taxon>
        <taxon>Hominidae</taxon>
        <taxon>Pan</taxon>
    </lineage>
</organism>
<keyword id="KW-1015">Disulfide bond</keyword>
<keyword id="KW-0325">Glycoprotein</keyword>
<keyword id="KW-0328">Glycosyltransferase</keyword>
<keyword id="KW-0333">Golgi apparatus</keyword>
<keyword id="KW-0443">Lipid metabolism</keyword>
<keyword id="KW-0472">Membrane</keyword>
<keyword id="KW-1185">Reference proteome</keyword>
<keyword id="KW-0735">Signal-anchor</keyword>
<keyword id="KW-0808">Transferase</keyword>
<keyword id="KW-0812">Transmembrane</keyword>
<keyword id="KW-1133">Transmembrane helix</keyword>
<sequence>MRRPSLLLKDILKCTLLVFGVWILYILKLNYTTEECDMKKMHYVDPDRVKRAQTYAQQVLQKECRPKFAKTSMALLFEHRYSVDLLPFVQKAPKDSEAESKYDPPFGFRKFSSKVQTLLELLPEHDLPEHLKAKTCRRCVVIGSGGILHGLELGHTLNQFDVVIRLNSAPVEGYSEHVGNKTTIRMTYPEGAPLSDLEYYSNDLFVAVLFKSVDFNWLQAMVKNETLPFWVRLFFWKQVAEKIPLQPKHFRILNPVIIKETAFDILQYSEPQSRFWGRDKNVPTIGVIAVVLATHLCDEVSLAGFGYDLSQPRTPLHYFDNQCMAAMNFQTMHNVTTETKFLLKLVKEGVVKDLSGGIDREF</sequence>
<name>SIAT9_PANTR</name>
<dbReference type="EC" id="2.4.3.9" evidence="2"/>
<dbReference type="EMBL" id="AJ744807">
    <property type="protein sequence ID" value="CAG32843.1"/>
    <property type="molecule type" value="mRNA"/>
</dbReference>
<dbReference type="RefSeq" id="NP_001032378.1">
    <property type="nucleotide sequence ID" value="NM_001037301.1"/>
</dbReference>
<dbReference type="SMR" id="Q6KB55"/>
<dbReference type="STRING" id="9598.ENSPTRP00000087081"/>
<dbReference type="CAZy" id="GT29">
    <property type="family name" value="Glycosyltransferase Family 29"/>
</dbReference>
<dbReference type="GlyCosmos" id="Q6KB55">
    <property type="glycosylation" value="4 sites, No reported glycans"/>
</dbReference>
<dbReference type="PaxDb" id="9598-ENSPTRP00000020834"/>
<dbReference type="GeneID" id="459371"/>
<dbReference type="KEGG" id="ptr:459371"/>
<dbReference type="CTD" id="8869"/>
<dbReference type="eggNOG" id="KOG2692">
    <property type="taxonomic scope" value="Eukaryota"/>
</dbReference>
<dbReference type="HOGENOM" id="CLU_032020_3_2_1"/>
<dbReference type="InParanoid" id="Q6KB55"/>
<dbReference type="TreeFam" id="TF352819"/>
<dbReference type="Proteomes" id="UP000002277">
    <property type="component" value="Unplaced"/>
</dbReference>
<dbReference type="GO" id="GO:0000139">
    <property type="term" value="C:Golgi membrane"/>
    <property type="evidence" value="ECO:0007669"/>
    <property type="project" value="UniProtKB-SubCell"/>
</dbReference>
<dbReference type="GO" id="GO:0047291">
    <property type="term" value="F:lactosylceramide alpha-2,3-sialyltransferase activity"/>
    <property type="evidence" value="ECO:0000250"/>
    <property type="project" value="UniProtKB"/>
</dbReference>
<dbReference type="GO" id="GO:0006629">
    <property type="term" value="P:lipid metabolic process"/>
    <property type="evidence" value="ECO:0007669"/>
    <property type="project" value="UniProtKB-KW"/>
</dbReference>
<dbReference type="GO" id="GO:0006486">
    <property type="term" value="P:protein glycosylation"/>
    <property type="evidence" value="ECO:0000318"/>
    <property type="project" value="GO_Central"/>
</dbReference>
<dbReference type="CDD" id="cd23983">
    <property type="entry name" value="GT29_ST3GAL5"/>
    <property type="match status" value="1"/>
</dbReference>
<dbReference type="FunFam" id="3.90.1480.20:FF:000006">
    <property type="entry name" value="ST3 beta-galactoside alpha-2,3-sialyltransferase 5"/>
    <property type="match status" value="1"/>
</dbReference>
<dbReference type="Gene3D" id="3.90.1480.20">
    <property type="entry name" value="Glycosyl transferase family 29"/>
    <property type="match status" value="1"/>
</dbReference>
<dbReference type="InterPro" id="IPR001675">
    <property type="entry name" value="Glyco_trans_29"/>
</dbReference>
<dbReference type="InterPro" id="IPR051142">
    <property type="entry name" value="Glycosyltransferase_29"/>
</dbReference>
<dbReference type="InterPro" id="IPR038578">
    <property type="entry name" value="GT29-like_sf"/>
</dbReference>
<dbReference type="InterPro" id="IPR012163">
    <property type="entry name" value="Sialyl_trans"/>
</dbReference>
<dbReference type="PANTHER" id="PTHR13713:SF60">
    <property type="entry name" value="LACTOSYLCERAMIDE ALPHA-2,3-SIALYLTRANSFERASE"/>
    <property type="match status" value="1"/>
</dbReference>
<dbReference type="PANTHER" id="PTHR13713">
    <property type="entry name" value="SIALYLTRANSFERASE"/>
    <property type="match status" value="1"/>
</dbReference>
<dbReference type="Pfam" id="PF00777">
    <property type="entry name" value="Glyco_transf_29"/>
    <property type="match status" value="1"/>
</dbReference>
<dbReference type="PIRSF" id="PIRSF005557">
    <property type="entry name" value="Sialyl_trans"/>
    <property type="match status" value="1"/>
</dbReference>
<gene>
    <name type="primary">ST3GAL5</name>
    <name type="synonym">SIAT9</name>
</gene>
<proteinExistence type="evidence at transcript level"/>
<evidence type="ECO:0000250" key="1"/>
<evidence type="ECO:0000250" key="2">
    <source>
        <dbReference type="UniProtKB" id="Q9UNP4"/>
    </source>
</evidence>
<evidence type="ECO:0000255" key="3"/>
<evidence type="ECO:0000305" key="4"/>
<comment type="function">
    <text evidence="2">Transfers the sialyl group (N-acetyl-alpha-neuraminyl or NeuAc) from CMP-NeuAc to the non-reducing terminal galactose (Gal) of glycosphingolipids forming gangliosides (important molecules involved in the regulation of multiple cellular processes, including cell proliferation and differentiation, apoptosis, embryogenesis, development, and oncogenesis). Mainly involved in the biosynthesis of ganglioside GM3 but can also use different glycolipids as substrate acceptors such as D-galactosylceramide (GalCer), asialo-GM2 (GA2) and asialo-GM1 (GA1), although less preferentially than beta-D-Gal-(1-&gt;4)-beta-D-Glc-(1&lt;-&gt;1)-Cer (LacCer).</text>
</comment>
<comment type="catalytic activity">
    <reaction evidence="2">
        <text>a beta-D-Gal-(1-&gt;4)-beta-D-Glc-(1&lt;-&gt;1)-Cer(d18:1(4E)) + CMP-N-acetyl-beta-neuraminate = a ganglioside GM3 (d18:1(4E)) + CMP + H(+)</text>
        <dbReference type="Rhea" id="RHEA:18417"/>
        <dbReference type="ChEBI" id="CHEBI:15378"/>
        <dbReference type="ChEBI" id="CHEBI:17950"/>
        <dbReference type="ChEBI" id="CHEBI:57812"/>
        <dbReference type="ChEBI" id="CHEBI:60065"/>
        <dbReference type="ChEBI" id="CHEBI:60377"/>
        <dbReference type="EC" id="2.4.3.9"/>
    </reaction>
    <physiologicalReaction direction="left-to-right" evidence="2">
        <dbReference type="Rhea" id="RHEA:18418"/>
    </physiologicalReaction>
</comment>
<comment type="catalytic activity">
    <reaction evidence="2">
        <text>ganglioside GA2 (d18:1(4E)/18:0) + CMP-N-acetyl-beta-neuraminate = ganglioside GM2 (d18:1(4E)/18:0) + CMP + H(+)</text>
        <dbReference type="Rhea" id="RHEA:41776"/>
        <dbReference type="ChEBI" id="CHEBI:15378"/>
        <dbReference type="ChEBI" id="CHEBI:57812"/>
        <dbReference type="ChEBI" id="CHEBI:60377"/>
        <dbReference type="ChEBI" id="CHEBI:78485"/>
        <dbReference type="ChEBI" id="CHEBI:78486"/>
    </reaction>
    <physiologicalReaction direction="left-to-right" evidence="2">
        <dbReference type="Rhea" id="RHEA:41777"/>
    </physiologicalReaction>
</comment>
<comment type="catalytic activity">
    <reaction evidence="2">
        <text>a beta-D-Gal-(1&lt;-&gt;1')-ceramide + CMP-N-acetyl-beta-neuraminate = N-acetyl-alpha-neuraminosyl-(2-&gt;3)-beta-D-galactosyl-(1&lt;-&gt;1')-ceramide + CMP + H(+)</text>
        <dbReference type="Rhea" id="RHEA:41780"/>
        <dbReference type="ChEBI" id="CHEBI:15378"/>
        <dbReference type="ChEBI" id="CHEBI:57812"/>
        <dbReference type="ChEBI" id="CHEBI:60377"/>
        <dbReference type="ChEBI" id="CHEBI:82643"/>
        <dbReference type="ChEBI" id="CHEBI:143593"/>
    </reaction>
    <physiologicalReaction direction="left-to-right" evidence="2">
        <dbReference type="Rhea" id="RHEA:41781"/>
    </physiologicalReaction>
</comment>
<comment type="catalytic activity">
    <reaction evidence="2">
        <text>ganglioside GA1 (d18:1(4E)/18:0) + CMP-N-acetyl-beta-neuraminate = ganglioside GM1 (d18:1(4E)/18:0) + CMP + H(+)</text>
        <dbReference type="Rhea" id="RHEA:41784"/>
        <dbReference type="ChEBI" id="CHEBI:15378"/>
        <dbReference type="ChEBI" id="CHEBI:57812"/>
        <dbReference type="ChEBI" id="CHEBI:60377"/>
        <dbReference type="ChEBI" id="CHEBI:73110"/>
        <dbReference type="ChEBI" id="CHEBI:78484"/>
    </reaction>
    <physiologicalReaction direction="left-to-right" evidence="2">
        <dbReference type="Rhea" id="RHEA:41785"/>
    </physiologicalReaction>
</comment>
<comment type="subcellular location">
    <subcellularLocation>
        <location evidence="4">Golgi apparatus membrane</location>
        <topology evidence="4">Single-pass type II membrane protein</topology>
    </subcellularLocation>
</comment>
<comment type="similarity">
    <text evidence="4">Belongs to the glycosyltransferase 29 family.</text>
</comment>
<reference key="1">
    <citation type="submission" date="2004-06" db="EMBL/GenBank/DDBJ databases">
        <title>Phylogeny of sialyltransferases.</title>
        <authorList>
            <person name="Harduin-Lepers A."/>
            <person name="Martinez-Duncker I."/>
            <person name="Mollicone R."/>
            <person name="Delannoy P."/>
            <person name="Oriol R."/>
        </authorList>
    </citation>
    <scope>NUCLEOTIDE SEQUENCE [MRNA]</scope>
</reference>